<comment type="function">
    <text evidence="1 8">Multifunctional protein involved in endocytosis, multivesicular body biogenesis, membrane repair, cytokinesis, apoptosis and maintenance of tight junction integrity. Class E VPS protein involved in concentration and sorting of cargo proteins of the multivesicular body (MVB) for incorporation into intralumenal vesicles (ILVs) that are generated by invagination and scission from the limiting membrane of the endosome. Binds to the phospholipid lysobisphosphatidic acid (LBPA) which is abundant in MVBs internal membranes. The MVB pathway requires the sequential function of ESCRT-O, -I,-II and -III complexes. The ESCRT machinery also functions in topologically equivalent membrane fission events, such as the terminal stages of cytokinesis. Adapter for a subset of ESCRT-III proteins, such as CHMP4, to function at distinct membranes. Required for completion of cytokinesis. May play a role in the regulation of both apoptosis and cell proliferation. Regulates exosome biogenesis in concert with SDC1/4 and SDCBP (By similarity). By interacting with F-actin, PARD3 and TJP1 secures the proper assembly and positioning of actomyosin-tight junction complex at the apical sides of adjacent epithelial cells that defines a spatial membrane domain essential for the maintenance of epithelial cell polarity and barrier (PubMed:27336173).</text>
</comment>
<comment type="subunit">
    <text evidence="1 2 5 7 8">Self-associates (By similarity). Interacts with SH3KBP1 (By similarity). Interacts with PDCD6 in a calcium-dependent manner (By similarity). Interacts with TSG101 in a calcium-dependent manner; PDCD6IP homooligomerization may be required for TSG101-binding (By similarity). Interacts with SGSM3 (By similarity). Directly interacts with CHMP4A, CHMP4B and CHMP4C (By similarity). Directly interacts with CEP55 in a 1:2 stoechiometry; this interaction is required for PDCD6IP targeting to the midbody (By similarity). May interact with PDGFRB (By similarity). Interacts with SH3GL1 and SH3GL2/endophilin-1 (By similarity). Forms a complex with SDCBP and SDC2 (PubMed:22660413). Found in a complex with F-actin, TJP1/ZO-1 and PARD3 (PubMed:27336173). Interacts with CD2AP (By similarity). Interacts with ARRDC1 (By similarity). Interacts (via BRO1 domain) with the ATG12-ATG3 conjugat; this interaction is bridged by ATG12 and promotes multiple PDCD6IP-mediated functions such as endolysosomal trafficking, macroautophagy and exosome biogenesis (PubMed:25686249).</text>
</comment>
<comment type="interaction">
    <interactant intactId="EBI-641897">
        <id>Q9WU78</id>
    </interactant>
    <interactant intactId="EBI-617954">
        <id>Q8CIH5</id>
        <label>Plcg2</label>
    </interactant>
    <organismsDiffer>false</organismsDiffer>
    <experiments>7</experiments>
</comment>
<comment type="interaction">
    <interactant intactId="EBI-641897">
        <id>Q9WU78</id>
    </interactant>
    <interactant intactId="EBI-538265">
        <id>O08992</id>
        <label>Sdcbp</label>
    </interactant>
    <organismsDiffer>false</organismsDiffer>
    <experiments>3</experiments>
</comment>
<comment type="interaction">
    <interactant intactId="EBI-15788421">
        <id>Q9WU78-1</id>
    </interactant>
    <interactant intactId="EBI-2911788">
        <id>Q9CQY1</id>
        <label>Atg12</label>
    </interactant>
    <organismsDiffer>false</organismsDiffer>
    <experiments>3</experiments>
</comment>
<comment type="interaction">
    <interactant intactId="EBI-15788421">
        <id>Q9WU78-1</id>
    </interactant>
    <interactant intactId="EBI-15788421">
        <id>Q9WU78-1</id>
        <label>Pdcd6ip</label>
    </interactant>
    <organismsDiffer>false</organismsDiffer>
    <experiments>6</experiments>
</comment>
<comment type="interaction">
    <interactant intactId="EBI-15788421">
        <id>Q9WU78-1</id>
    </interactant>
    <interactant intactId="EBI-749627">
        <id>Q9H444</id>
        <label>CHMP4B</label>
    </interactant>
    <organismsDiffer>true</organismsDiffer>
    <experiments>2</experiments>
</comment>
<comment type="interaction">
    <interactant intactId="EBI-15788421">
        <id>Q9WU78-1</id>
    </interactant>
    <interactant intactId="EBI-1170392">
        <id>P17931</id>
        <label>LGALS3</label>
    </interactant>
    <organismsDiffer>true</organismsDiffer>
    <experiments>2</experiments>
</comment>
<comment type="subcellular location">
    <subcellularLocation>
        <location evidence="2">Cytoplasm</location>
        <location evidence="2">Cytosol</location>
    </subcellularLocation>
    <subcellularLocation>
        <location evidence="1">Melanosome</location>
    </subcellularLocation>
    <subcellularLocation>
        <location evidence="1">Cytoplasm</location>
        <location evidence="1">Cytoskeleton</location>
        <location evidence="1">Microtubule organizing center</location>
        <location evidence="1">Centrosome</location>
    </subcellularLocation>
    <subcellularLocation>
        <location evidence="6">Secreted</location>
        <location evidence="6">Extracellular exosome</location>
    </subcellularLocation>
    <subcellularLocation>
        <location evidence="8">Cell junction</location>
        <location evidence="8">Tight junction</location>
    </subcellularLocation>
    <subcellularLocation>
        <location evidence="1">Midbody</location>
        <location evidence="1">Midbody ring</location>
    </subcellularLocation>
    <text evidence="1 8">Colocalized with CEP55 in the midbody during cytokinesis and at centrosomes in non-dividing cells (By similarity). Component of the actomyosin-tight junction complex (PubMed:27336173).</text>
</comment>
<comment type="alternative products">
    <event type="alternative splicing"/>
    <isoform>
        <id>Q9WU78-1</id>
        <name>1</name>
        <sequence type="displayed"/>
    </isoform>
    <isoform>
        <id>Q9WU78-2</id>
        <name>2</name>
        <name>Alix-SF</name>
        <name>Short</name>
        <sequence type="described" ref="VSP_007502"/>
    </isoform>
    <isoform>
        <id>Q9WU78-3</id>
        <name>3</name>
        <sequence type="described" ref="VSP_007501"/>
    </isoform>
</comment>
<comment type="tissue specificity">
    <text evidence="8">Ubiquitously expressed (PubMed:27336173). High expression in choroid plexus and low expression in cerebral cortex (at protein level) (PubMed:27336173).</text>
</comment>
<comment type="PTM">
    <text evidence="1">May be phosphorylated on tyrosine residues by activated PDGFRB.</text>
</comment>
<comment type="disruption phenotype">
    <text evidence="8">Deficient mice are viable and have a normal lifespan, although they are smaller in size. Mutant mice develop progressive and severe bilateral hydrocephalus (PubMed:27336173).</text>
</comment>
<comment type="miscellaneous">
    <molecule>Isoform 2</molecule>
    <text evidence="11">Does not interact with ALG-2.</text>
</comment>
<accession>Q9WU78</accession>
<accession>O88695</accession>
<accession>O89014</accession>
<accession>Q3TED2</accession>
<accession>Q8BSL8</accession>
<accession>Q8R0H5</accession>
<accession>Q99LR3</accession>
<accession>Q9QZN8</accession>
<evidence type="ECO:0000250" key="1">
    <source>
        <dbReference type="UniProtKB" id="Q8WUM4"/>
    </source>
</evidence>
<evidence type="ECO:0000250" key="2">
    <source>
        <dbReference type="UniProtKB" id="Q9QZA2"/>
    </source>
</evidence>
<evidence type="ECO:0000255" key="3">
    <source>
        <dbReference type="PROSITE-ProRule" id="PRU00526"/>
    </source>
</evidence>
<evidence type="ECO:0000256" key="4">
    <source>
        <dbReference type="SAM" id="MobiDB-lite"/>
    </source>
</evidence>
<evidence type="ECO:0000269" key="5">
    <source>
    </source>
</evidence>
<evidence type="ECO:0000269" key="6">
    <source>
    </source>
</evidence>
<evidence type="ECO:0000269" key="7">
    <source>
    </source>
</evidence>
<evidence type="ECO:0000269" key="8">
    <source>
    </source>
</evidence>
<evidence type="ECO:0000303" key="9">
    <source>
    </source>
</evidence>
<evidence type="ECO:0000303" key="10">
    <source>
    </source>
</evidence>
<evidence type="ECO:0000305" key="11"/>
<evidence type="ECO:0000312" key="12">
    <source>
        <dbReference type="MGI" id="MGI:1333753"/>
    </source>
</evidence>
<protein>
    <recommendedName>
        <fullName evidence="11">Programmed cell death 6-interacting protein</fullName>
    </recommendedName>
    <alternativeName>
        <fullName>ALG-2-interacting protein 1</fullName>
    </alternativeName>
    <alternativeName>
        <fullName>ALG-2-interacting protein X</fullName>
    </alternativeName>
    <alternativeName>
        <fullName>E2F1-inducible protein</fullName>
    </alternativeName>
    <alternativeName>
        <fullName>Eig2</fullName>
    </alternativeName>
</protein>
<organism>
    <name type="scientific">Mus musculus</name>
    <name type="common">Mouse</name>
    <dbReference type="NCBI Taxonomy" id="10090"/>
    <lineage>
        <taxon>Eukaryota</taxon>
        <taxon>Metazoa</taxon>
        <taxon>Chordata</taxon>
        <taxon>Craniata</taxon>
        <taxon>Vertebrata</taxon>
        <taxon>Euteleostomi</taxon>
        <taxon>Mammalia</taxon>
        <taxon>Eutheria</taxon>
        <taxon>Euarchontoglires</taxon>
        <taxon>Glires</taxon>
        <taxon>Rodentia</taxon>
        <taxon>Myomorpha</taxon>
        <taxon>Muroidea</taxon>
        <taxon>Muridae</taxon>
        <taxon>Murinae</taxon>
        <taxon>Mus</taxon>
        <taxon>Mus</taxon>
    </lineage>
</organism>
<reference key="1">
    <citation type="journal article" date="1999" name="Cell Death Differ.">
        <title>Alix, a novel mouse protein undergoing calcium-dependent interaction with the apoptosis-linked-gene 2 (ALG-2) protein.</title>
        <authorList>
            <person name="Missotten M."/>
            <person name="Nichols A."/>
            <person name="Rieger K."/>
            <person name="Sadoul R."/>
        </authorList>
    </citation>
    <scope>NUCLEOTIDE SEQUENCE [MRNA] (ISOFORMS 1 AND 2)</scope>
    <scope>INTERACTION WITH PDCD6</scope>
    <source>
        <tissue>Brain</tissue>
    </source>
</reference>
<reference key="2">
    <citation type="journal article" date="1999" name="J. Biol. Chem.">
        <title>Cloning of AIP1, a novel protein that associates with the apoptosis-linked gene ALG-2 in a Ca2+-dependent reaction.</title>
        <authorList>
            <person name="Vito P."/>
            <person name="Pellegrini L."/>
            <person name="Guiet C."/>
            <person name="D'Adamio L."/>
        </authorList>
    </citation>
    <scope>NUCLEOTIDE SEQUENCE [MRNA] (ISOFORM 1)</scope>
</reference>
<reference key="3">
    <citation type="journal article" date="2005" name="Science">
        <title>The transcriptional landscape of the mammalian genome.</title>
        <authorList>
            <person name="Carninci P."/>
            <person name="Kasukawa T."/>
            <person name="Katayama S."/>
            <person name="Gough J."/>
            <person name="Frith M.C."/>
            <person name="Maeda N."/>
            <person name="Oyama R."/>
            <person name="Ravasi T."/>
            <person name="Lenhard B."/>
            <person name="Wells C."/>
            <person name="Kodzius R."/>
            <person name="Shimokawa K."/>
            <person name="Bajic V.B."/>
            <person name="Brenner S.E."/>
            <person name="Batalov S."/>
            <person name="Forrest A.R."/>
            <person name="Zavolan M."/>
            <person name="Davis M.J."/>
            <person name="Wilming L.G."/>
            <person name="Aidinis V."/>
            <person name="Allen J.E."/>
            <person name="Ambesi-Impiombato A."/>
            <person name="Apweiler R."/>
            <person name="Aturaliya R.N."/>
            <person name="Bailey T.L."/>
            <person name="Bansal M."/>
            <person name="Baxter L."/>
            <person name="Beisel K.W."/>
            <person name="Bersano T."/>
            <person name="Bono H."/>
            <person name="Chalk A.M."/>
            <person name="Chiu K.P."/>
            <person name="Choudhary V."/>
            <person name="Christoffels A."/>
            <person name="Clutterbuck D.R."/>
            <person name="Crowe M.L."/>
            <person name="Dalla E."/>
            <person name="Dalrymple B.P."/>
            <person name="de Bono B."/>
            <person name="Della Gatta G."/>
            <person name="di Bernardo D."/>
            <person name="Down T."/>
            <person name="Engstrom P."/>
            <person name="Fagiolini M."/>
            <person name="Faulkner G."/>
            <person name="Fletcher C.F."/>
            <person name="Fukushima T."/>
            <person name="Furuno M."/>
            <person name="Futaki S."/>
            <person name="Gariboldi M."/>
            <person name="Georgii-Hemming P."/>
            <person name="Gingeras T.R."/>
            <person name="Gojobori T."/>
            <person name="Green R.E."/>
            <person name="Gustincich S."/>
            <person name="Harbers M."/>
            <person name="Hayashi Y."/>
            <person name="Hensch T.K."/>
            <person name="Hirokawa N."/>
            <person name="Hill D."/>
            <person name="Huminiecki L."/>
            <person name="Iacono M."/>
            <person name="Ikeo K."/>
            <person name="Iwama A."/>
            <person name="Ishikawa T."/>
            <person name="Jakt M."/>
            <person name="Kanapin A."/>
            <person name="Katoh M."/>
            <person name="Kawasawa Y."/>
            <person name="Kelso J."/>
            <person name="Kitamura H."/>
            <person name="Kitano H."/>
            <person name="Kollias G."/>
            <person name="Krishnan S.P."/>
            <person name="Kruger A."/>
            <person name="Kummerfeld S.K."/>
            <person name="Kurochkin I.V."/>
            <person name="Lareau L.F."/>
            <person name="Lazarevic D."/>
            <person name="Lipovich L."/>
            <person name="Liu J."/>
            <person name="Liuni S."/>
            <person name="McWilliam S."/>
            <person name="Madan Babu M."/>
            <person name="Madera M."/>
            <person name="Marchionni L."/>
            <person name="Matsuda H."/>
            <person name="Matsuzawa S."/>
            <person name="Miki H."/>
            <person name="Mignone F."/>
            <person name="Miyake S."/>
            <person name="Morris K."/>
            <person name="Mottagui-Tabar S."/>
            <person name="Mulder N."/>
            <person name="Nakano N."/>
            <person name="Nakauchi H."/>
            <person name="Ng P."/>
            <person name="Nilsson R."/>
            <person name="Nishiguchi S."/>
            <person name="Nishikawa S."/>
            <person name="Nori F."/>
            <person name="Ohara O."/>
            <person name="Okazaki Y."/>
            <person name="Orlando V."/>
            <person name="Pang K.C."/>
            <person name="Pavan W.J."/>
            <person name="Pavesi G."/>
            <person name="Pesole G."/>
            <person name="Petrovsky N."/>
            <person name="Piazza S."/>
            <person name="Reed J."/>
            <person name="Reid J.F."/>
            <person name="Ring B.Z."/>
            <person name="Ringwald M."/>
            <person name="Rost B."/>
            <person name="Ruan Y."/>
            <person name="Salzberg S.L."/>
            <person name="Sandelin A."/>
            <person name="Schneider C."/>
            <person name="Schoenbach C."/>
            <person name="Sekiguchi K."/>
            <person name="Semple C.A."/>
            <person name="Seno S."/>
            <person name="Sessa L."/>
            <person name="Sheng Y."/>
            <person name="Shibata Y."/>
            <person name="Shimada H."/>
            <person name="Shimada K."/>
            <person name="Silva D."/>
            <person name="Sinclair B."/>
            <person name="Sperling S."/>
            <person name="Stupka E."/>
            <person name="Sugiura K."/>
            <person name="Sultana R."/>
            <person name="Takenaka Y."/>
            <person name="Taki K."/>
            <person name="Tammoja K."/>
            <person name="Tan S.L."/>
            <person name="Tang S."/>
            <person name="Taylor M.S."/>
            <person name="Tegner J."/>
            <person name="Teichmann S.A."/>
            <person name="Ueda H.R."/>
            <person name="van Nimwegen E."/>
            <person name="Verardo R."/>
            <person name="Wei C.L."/>
            <person name="Yagi K."/>
            <person name="Yamanishi H."/>
            <person name="Zabarovsky E."/>
            <person name="Zhu S."/>
            <person name="Zimmer A."/>
            <person name="Hide W."/>
            <person name="Bult C."/>
            <person name="Grimmond S.M."/>
            <person name="Teasdale R.D."/>
            <person name="Liu E.T."/>
            <person name="Brusic V."/>
            <person name="Quackenbush J."/>
            <person name="Wahlestedt C."/>
            <person name="Mattick J.S."/>
            <person name="Hume D.A."/>
            <person name="Kai C."/>
            <person name="Sasaki D."/>
            <person name="Tomaru Y."/>
            <person name="Fukuda S."/>
            <person name="Kanamori-Katayama M."/>
            <person name="Suzuki M."/>
            <person name="Aoki J."/>
            <person name="Arakawa T."/>
            <person name="Iida J."/>
            <person name="Imamura K."/>
            <person name="Itoh M."/>
            <person name="Kato T."/>
            <person name="Kawaji H."/>
            <person name="Kawagashira N."/>
            <person name="Kawashima T."/>
            <person name="Kojima M."/>
            <person name="Kondo S."/>
            <person name="Konno H."/>
            <person name="Nakano K."/>
            <person name="Ninomiya N."/>
            <person name="Nishio T."/>
            <person name="Okada M."/>
            <person name="Plessy C."/>
            <person name="Shibata K."/>
            <person name="Shiraki T."/>
            <person name="Suzuki S."/>
            <person name="Tagami M."/>
            <person name="Waki K."/>
            <person name="Watahiki A."/>
            <person name="Okamura-Oho Y."/>
            <person name="Suzuki H."/>
            <person name="Kawai J."/>
            <person name="Hayashizaki Y."/>
        </authorList>
    </citation>
    <scope>NUCLEOTIDE SEQUENCE [LARGE SCALE MRNA] (ISOFORMS 1 AND 3)</scope>
    <source>
        <strain>C57BL/6J</strain>
        <strain>NOD</strain>
        <tissue>Forelimb</tissue>
        <tissue>Placenta</tissue>
        <tissue>Thymus</tissue>
    </source>
</reference>
<reference key="4">
    <citation type="journal article" date="2009" name="PLoS Biol.">
        <title>Lineage-specific biology revealed by a finished genome assembly of the mouse.</title>
        <authorList>
            <person name="Church D.M."/>
            <person name="Goodstadt L."/>
            <person name="Hillier L.W."/>
            <person name="Zody M.C."/>
            <person name="Goldstein S."/>
            <person name="She X."/>
            <person name="Bult C.J."/>
            <person name="Agarwala R."/>
            <person name="Cherry J.L."/>
            <person name="DiCuccio M."/>
            <person name="Hlavina W."/>
            <person name="Kapustin Y."/>
            <person name="Meric P."/>
            <person name="Maglott D."/>
            <person name="Birtle Z."/>
            <person name="Marques A.C."/>
            <person name="Graves T."/>
            <person name="Zhou S."/>
            <person name="Teague B."/>
            <person name="Potamousis K."/>
            <person name="Churas C."/>
            <person name="Place M."/>
            <person name="Herschleb J."/>
            <person name="Runnheim R."/>
            <person name="Forrest D."/>
            <person name="Amos-Landgraf J."/>
            <person name="Schwartz D.C."/>
            <person name="Cheng Z."/>
            <person name="Lindblad-Toh K."/>
            <person name="Eichler E.E."/>
            <person name="Ponting C.P."/>
        </authorList>
    </citation>
    <scope>NUCLEOTIDE SEQUENCE [LARGE SCALE GENOMIC DNA]</scope>
    <source>
        <strain>C57BL/6J</strain>
    </source>
</reference>
<reference key="5">
    <citation type="submission" date="2005-09" db="EMBL/GenBank/DDBJ databases">
        <authorList>
            <person name="Mural R.J."/>
            <person name="Adams M.D."/>
            <person name="Myers E.W."/>
            <person name="Smith H.O."/>
            <person name="Venter J.C."/>
        </authorList>
    </citation>
    <scope>NUCLEOTIDE SEQUENCE [LARGE SCALE GENOMIC DNA]</scope>
</reference>
<reference key="6">
    <citation type="journal article" date="2004" name="Genome Res.">
        <title>The status, quality, and expansion of the NIH full-length cDNA project: the Mammalian Gene Collection (MGC).</title>
        <authorList>
            <consortium name="The MGC Project Team"/>
        </authorList>
    </citation>
    <scope>NUCLEOTIDE SEQUENCE [LARGE SCALE MRNA] (ISOFORM 1)</scope>
    <source>
        <tissue>Mammary gland</tissue>
    </source>
</reference>
<reference key="7">
    <citation type="journal article" date="1999" name="Nucleic Acids Res.">
        <title>Rapid analysis of gene expression (RAGE) facilitates universal expression profiling.</title>
        <authorList>
            <person name="Wang A.J."/>
            <person name="Pierce A."/>
            <person name="Judson-Kremer K."/>
            <person name="Gaddis S."/>
            <person name="Aldaz C.M."/>
            <person name="Johnson D.G."/>
            <person name="MacLeod M.C."/>
        </authorList>
    </citation>
    <scope>NUCLEOTIDE SEQUENCE [MRNA] OF 671-869</scope>
    <source>
        <strain>C57BL/6J</strain>
        <tissue>Forelimb</tissue>
    </source>
</reference>
<reference key="8">
    <citation type="journal article" date="2010" name="Cell">
        <title>A tissue-specific atlas of mouse protein phosphorylation and expression.</title>
        <authorList>
            <person name="Huttlin E.L."/>
            <person name="Jedrychowski M.P."/>
            <person name="Elias J.E."/>
            <person name="Goswami T."/>
            <person name="Rad R."/>
            <person name="Beausoleil S.A."/>
            <person name="Villen J."/>
            <person name="Haas W."/>
            <person name="Sowa M.E."/>
            <person name="Gygi S.P."/>
        </authorList>
    </citation>
    <scope>IDENTIFICATION BY MASS SPECTROMETRY [LARGE SCALE ANALYSIS]</scope>
    <source>
        <tissue>Brain</tissue>
        <tissue>Brown adipose tissue</tissue>
        <tissue>Heart</tissue>
        <tissue>Kidney</tissue>
        <tissue>Liver</tissue>
        <tissue>Lung</tissue>
        <tissue>Pancreas</tissue>
        <tissue>Spleen</tissue>
        <tissue>Testis</tissue>
    </source>
</reference>
<reference key="9">
    <citation type="journal article" date="2012" name="Nat. Cell Biol.">
        <title>Syndecan-syntenin-ALIX regulates the biogenesis of exosomes.</title>
        <authorList>
            <person name="Baietti M.F."/>
            <person name="Zhang Z."/>
            <person name="Mortier E."/>
            <person name="Melchior A."/>
            <person name="Degeest G."/>
            <person name="Geeraerts A."/>
            <person name="Ivarsson Y."/>
            <person name="Depoortere F."/>
            <person name="Coomans C."/>
            <person name="Vermeiren E."/>
            <person name="Zimmermann P."/>
            <person name="David G."/>
        </authorList>
    </citation>
    <scope>INTERACTION WITH SDCBP</scope>
</reference>
<reference key="10">
    <citation type="journal article" date="2013" name="FEBS Lett.">
        <title>Identification and characterization of the nano-sized vesicles released by muscle cells.</title>
        <authorList>
            <person name="Romancino D.P."/>
            <person name="Paterniti G."/>
            <person name="Campos Y."/>
            <person name="De Luca A."/>
            <person name="Di Felice V."/>
            <person name="d'Azzo A."/>
            <person name="Bongiovanni A."/>
        </authorList>
    </citation>
    <scope>SUBCELLULAR LOCATION</scope>
</reference>
<reference key="11">
    <citation type="journal article" date="2015" name="Nat. Cell Biol.">
        <title>ATG12-ATG3 interacts with Alix to promote basal autophagic flux and late endosome function.</title>
        <authorList>
            <person name="Murrow L."/>
            <person name="Malhotra R."/>
            <person name="Debnath J."/>
        </authorList>
    </citation>
    <scope>INTERACTION WITH ATG3</scope>
</reference>
<reference key="12">
    <citation type="journal article" date="2016" name="Nat. Commun.">
        <title>Alix-mediated assembly of the actomyosin-tight junction polarity complex preserves epithelial polarity and epithelial barrier.</title>
        <authorList>
            <person name="Campos Y."/>
            <person name="Qiu X."/>
            <person name="Gomero E."/>
            <person name="Wakefield R."/>
            <person name="Horner L."/>
            <person name="Brutkowski W."/>
            <person name="Han Y.G."/>
            <person name="Solecki D."/>
            <person name="Frase S."/>
            <person name="Bongiovanni A."/>
            <person name="d'Azzo A."/>
        </authorList>
    </citation>
    <scope>DISRUPTION PHENOTYPE</scope>
    <scope>TISSUE SPECIFICITY</scope>
    <scope>FUNCTION</scope>
    <scope>SUBCELLULAR LOCATION</scope>
    <scope>INTERACTION WITH F-ACTIN; TJP1 AND PARD3</scope>
</reference>
<dbReference type="EMBL" id="AJ005073">
    <property type="protein sequence ID" value="CAA06329.1"/>
    <property type="molecule type" value="mRNA"/>
</dbReference>
<dbReference type="EMBL" id="AJ005074">
    <property type="protein sequence ID" value="CAA06330.1"/>
    <property type="molecule type" value="mRNA"/>
</dbReference>
<dbReference type="EMBL" id="AF119955">
    <property type="protein sequence ID" value="AAD26813.1"/>
    <property type="molecule type" value="mRNA"/>
</dbReference>
<dbReference type="EMBL" id="AK031256">
    <property type="protein sequence ID" value="BAC27323.1"/>
    <property type="molecule type" value="mRNA"/>
</dbReference>
<dbReference type="EMBL" id="AK167574">
    <property type="protein sequence ID" value="BAE39637.1"/>
    <property type="molecule type" value="mRNA"/>
</dbReference>
<dbReference type="EMBL" id="AK169704">
    <property type="protein sequence ID" value="BAE41316.1"/>
    <property type="molecule type" value="mRNA"/>
</dbReference>
<dbReference type="EMBL" id="AC162177">
    <property type="status" value="NOT_ANNOTATED_CDS"/>
    <property type="molecule type" value="Genomic_DNA"/>
</dbReference>
<dbReference type="EMBL" id="AC167246">
    <property type="status" value="NOT_ANNOTATED_CDS"/>
    <property type="molecule type" value="Genomic_DNA"/>
</dbReference>
<dbReference type="EMBL" id="CT025751">
    <property type="status" value="NOT_ANNOTATED_CDS"/>
    <property type="molecule type" value="Genomic_DNA"/>
</dbReference>
<dbReference type="EMBL" id="CH466621">
    <property type="protein sequence ID" value="EDL08950.1"/>
    <property type="molecule type" value="Genomic_DNA"/>
</dbReference>
<dbReference type="EMBL" id="BC002261">
    <property type="protein sequence ID" value="AAH02261.1"/>
    <property type="molecule type" value="mRNA"/>
</dbReference>
<dbReference type="EMBL" id="BC026823">
    <property type="protein sequence ID" value="AAH26823.1"/>
    <property type="molecule type" value="mRNA"/>
</dbReference>
<dbReference type="EMBL" id="AF176514">
    <property type="protein sequence ID" value="AAD53115.1"/>
    <property type="molecule type" value="mRNA"/>
</dbReference>
<dbReference type="CCDS" id="CCDS23588.1">
    <molecule id="Q9WU78-1"/>
</dbReference>
<dbReference type="CCDS" id="CCDS52947.1">
    <molecule id="Q9WU78-3"/>
</dbReference>
<dbReference type="RefSeq" id="NP_001158149.1">
    <molecule id="Q9WU78-3"/>
    <property type="nucleotide sequence ID" value="NM_001164677.1"/>
</dbReference>
<dbReference type="RefSeq" id="NP_001158150.1">
    <property type="nucleotide sequence ID" value="NM_001164678.1"/>
</dbReference>
<dbReference type="RefSeq" id="NP_035182.2">
    <molecule id="Q9WU78-1"/>
    <property type="nucleotide sequence ID" value="NM_011052.2"/>
</dbReference>
<dbReference type="SMR" id="Q9WU78"/>
<dbReference type="BioGRID" id="202072">
    <property type="interactions" value="13"/>
</dbReference>
<dbReference type="ComplexPortal" id="CPX-3283">
    <property type="entry name" value="Syndecan-1-syntenin-1-ALIX complex"/>
</dbReference>
<dbReference type="CORUM" id="Q9WU78"/>
<dbReference type="DIP" id="DIP-41418N"/>
<dbReference type="ELM" id="Q9WU78"/>
<dbReference type="FunCoup" id="Q9WU78">
    <property type="interactions" value="3667"/>
</dbReference>
<dbReference type="IntAct" id="Q9WU78">
    <property type="interactions" value="15"/>
</dbReference>
<dbReference type="MINT" id="Q9WU78"/>
<dbReference type="STRING" id="10090.ENSMUSP00000107492"/>
<dbReference type="GlyGen" id="Q9WU78">
    <property type="glycosylation" value="4 sites, 1 N-linked glycan (1 site), 1 O-linked glycan (1 site)"/>
</dbReference>
<dbReference type="iPTMnet" id="Q9WU78"/>
<dbReference type="PhosphoSitePlus" id="Q9WU78"/>
<dbReference type="SwissPalm" id="Q9WU78"/>
<dbReference type="REPRODUCTION-2DPAGE" id="Q9WU78"/>
<dbReference type="jPOST" id="Q9WU78"/>
<dbReference type="PaxDb" id="10090-ENSMUSP00000107492"/>
<dbReference type="PeptideAtlas" id="Q9WU78"/>
<dbReference type="ProteomicsDB" id="301775">
    <molecule id="Q9WU78-1"/>
</dbReference>
<dbReference type="ProteomicsDB" id="301776">
    <molecule id="Q9WU78-2"/>
</dbReference>
<dbReference type="ProteomicsDB" id="301777">
    <molecule id="Q9WU78-3"/>
</dbReference>
<dbReference type="Pumba" id="Q9WU78"/>
<dbReference type="DNASU" id="18571"/>
<dbReference type="Ensembl" id="ENSMUST00000035086.13">
    <molecule id="Q9WU78-1"/>
    <property type="protein sequence ID" value="ENSMUSP00000035086.7"/>
    <property type="gene ID" value="ENSMUSG00000032504.16"/>
</dbReference>
<dbReference type="Ensembl" id="ENSMUST00000111861.4">
    <molecule id="Q9WU78-3"/>
    <property type="protein sequence ID" value="ENSMUSP00000107492.4"/>
    <property type="gene ID" value="ENSMUSG00000032504.16"/>
</dbReference>
<dbReference type="GeneID" id="18571"/>
<dbReference type="KEGG" id="mmu:18571"/>
<dbReference type="UCSC" id="uc009rwn.2">
    <molecule id="Q9WU78-1"/>
    <property type="organism name" value="mouse"/>
</dbReference>
<dbReference type="UCSC" id="uc009rwo.2">
    <molecule id="Q9WU78-3"/>
    <property type="organism name" value="mouse"/>
</dbReference>
<dbReference type="AGR" id="MGI:1333753"/>
<dbReference type="CTD" id="10015"/>
<dbReference type="MGI" id="MGI:1333753">
    <property type="gene designation" value="Pdcd6ip"/>
</dbReference>
<dbReference type="VEuPathDB" id="HostDB:ENSMUSG00000032504"/>
<dbReference type="eggNOG" id="KOG2220">
    <property type="taxonomic scope" value="Eukaryota"/>
</dbReference>
<dbReference type="GeneTree" id="ENSGT01100000263856"/>
<dbReference type="HOGENOM" id="CLU_007181_2_0_1"/>
<dbReference type="InParanoid" id="Q9WU78"/>
<dbReference type="OMA" id="VSHAEEM"/>
<dbReference type="TreeFam" id="TF323502"/>
<dbReference type="Reactome" id="R-MMU-5213460">
    <property type="pathway name" value="RIPK1-mediated regulated necrosis"/>
</dbReference>
<dbReference type="Reactome" id="R-MMU-5675482">
    <property type="pathway name" value="Regulation of necroptotic cell death"/>
</dbReference>
<dbReference type="BioGRID-ORCS" id="18571">
    <property type="hits" value="23 hits in 77 CRISPR screens"/>
</dbReference>
<dbReference type="ChiTaRS" id="Pdcd6ip">
    <property type="organism name" value="mouse"/>
</dbReference>
<dbReference type="PRO" id="PR:Q9WU78"/>
<dbReference type="Proteomes" id="UP000000589">
    <property type="component" value="Chromosome 9"/>
</dbReference>
<dbReference type="RNAct" id="Q9WU78">
    <property type="molecule type" value="protein"/>
</dbReference>
<dbReference type="Bgee" id="ENSMUSG00000032504">
    <property type="expression patterns" value="Expressed in embryonic post-anal tail and 266 other cell types or tissues"/>
</dbReference>
<dbReference type="GO" id="GO:0042641">
    <property type="term" value="C:actomyosin"/>
    <property type="evidence" value="ECO:0000314"/>
    <property type="project" value="UniProtKB"/>
</dbReference>
<dbReference type="GO" id="GO:0005923">
    <property type="term" value="C:bicellular tight junction"/>
    <property type="evidence" value="ECO:0007669"/>
    <property type="project" value="UniProtKB-SubCell"/>
</dbReference>
<dbReference type="GO" id="GO:0005813">
    <property type="term" value="C:centrosome"/>
    <property type="evidence" value="ECO:0007669"/>
    <property type="project" value="UniProtKB-SubCell"/>
</dbReference>
<dbReference type="GO" id="GO:0005829">
    <property type="term" value="C:cytosol"/>
    <property type="evidence" value="ECO:0000314"/>
    <property type="project" value="MGI"/>
</dbReference>
<dbReference type="GO" id="GO:0070062">
    <property type="term" value="C:extracellular exosome"/>
    <property type="evidence" value="ECO:0000314"/>
    <property type="project" value="UniProtKB"/>
</dbReference>
<dbReference type="GO" id="GO:0090543">
    <property type="term" value="C:Flemming body"/>
    <property type="evidence" value="ECO:0000250"/>
    <property type="project" value="UniProtKB"/>
</dbReference>
<dbReference type="GO" id="GO:0042470">
    <property type="term" value="C:melanosome"/>
    <property type="evidence" value="ECO:0007669"/>
    <property type="project" value="UniProtKB-SubCell"/>
</dbReference>
<dbReference type="GO" id="GO:0043209">
    <property type="term" value="C:myelin sheath"/>
    <property type="evidence" value="ECO:0007005"/>
    <property type="project" value="UniProtKB"/>
</dbReference>
<dbReference type="GO" id="GO:0042802">
    <property type="term" value="F:identical protein binding"/>
    <property type="evidence" value="ECO:0000353"/>
    <property type="project" value="IntAct"/>
</dbReference>
<dbReference type="GO" id="GO:0046983">
    <property type="term" value="F:protein dimerization activity"/>
    <property type="evidence" value="ECO:0000353"/>
    <property type="project" value="UniProtKB"/>
</dbReference>
<dbReference type="GO" id="GO:0017124">
    <property type="term" value="F:SH3 domain binding"/>
    <property type="evidence" value="ECO:0007669"/>
    <property type="project" value="Ensembl"/>
</dbReference>
<dbReference type="GO" id="GO:0000915">
    <property type="term" value="P:actomyosin contractile ring assembly"/>
    <property type="evidence" value="ECO:0000315"/>
    <property type="project" value="UniProtKB"/>
</dbReference>
<dbReference type="GO" id="GO:0006915">
    <property type="term" value="P:apoptotic process"/>
    <property type="evidence" value="ECO:0000304"/>
    <property type="project" value="MGI"/>
</dbReference>
<dbReference type="GO" id="GO:0070830">
    <property type="term" value="P:bicellular tight junction assembly"/>
    <property type="evidence" value="ECO:0000315"/>
    <property type="project" value="UniProtKB"/>
</dbReference>
<dbReference type="GO" id="GO:0097734">
    <property type="term" value="P:extracellular exosome biogenesis"/>
    <property type="evidence" value="ECO:0000315"/>
    <property type="project" value="UniProtKB"/>
</dbReference>
<dbReference type="GO" id="GO:0016236">
    <property type="term" value="P:macroautophagy"/>
    <property type="evidence" value="ECO:0000315"/>
    <property type="project" value="UniProtKB"/>
</dbReference>
<dbReference type="GO" id="GO:0045199">
    <property type="term" value="P:maintenance of epithelial cell apical/basal polarity"/>
    <property type="evidence" value="ECO:0000315"/>
    <property type="project" value="UniProtKB"/>
</dbReference>
<dbReference type="GO" id="GO:0000281">
    <property type="term" value="P:mitotic cytokinesis"/>
    <property type="evidence" value="ECO:0000250"/>
    <property type="project" value="UniProtKB"/>
</dbReference>
<dbReference type="GO" id="GO:0015031">
    <property type="term" value="P:protein transport"/>
    <property type="evidence" value="ECO:0007669"/>
    <property type="project" value="UniProtKB-KW"/>
</dbReference>
<dbReference type="GO" id="GO:0090559">
    <property type="term" value="P:regulation of membrane permeability"/>
    <property type="evidence" value="ECO:0000315"/>
    <property type="project" value="UniProtKB"/>
</dbReference>
<dbReference type="CDD" id="cd09240">
    <property type="entry name" value="BRO1_Alix"/>
    <property type="match status" value="1"/>
</dbReference>
<dbReference type="CDD" id="cd09235">
    <property type="entry name" value="V_Alix"/>
    <property type="match status" value="1"/>
</dbReference>
<dbReference type="FunFam" id="1.25.40.280:FF:000001">
    <property type="entry name" value="programmed cell death 6-interacting protein-like isoform X1"/>
    <property type="match status" value="1"/>
</dbReference>
<dbReference type="FunFam" id="1.20.140.50:FF:000001">
    <property type="entry name" value="programmed cell death 6-interacting protein-like isoform X2"/>
    <property type="match status" value="1"/>
</dbReference>
<dbReference type="Gene3D" id="1.20.120.560">
    <property type="entry name" value="alix/aip1 in complex with the ypdl late domain"/>
    <property type="match status" value="1"/>
</dbReference>
<dbReference type="Gene3D" id="1.20.140.50">
    <property type="entry name" value="alix/aip1 like domains"/>
    <property type="match status" value="1"/>
</dbReference>
<dbReference type="Gene3D" id="1.25.40.280">
    <property type="entry name" value="alix/aip1 like domains"/>
    <property type="match status" value="1"/>
</dbReference>
<dbReference type="InterPro" id="IPR025304">
    <property type="entry name" value="ALIX_V_dom"/>
</dbReference>
<dbReference type="InterPro" id="IPR004328">
    <property type="entry name" value="BRO1_dom"/>
</dbReference>
<dbReference type="InterPro" id="IPR038499">
    <property type="entry name" value="BRO1_sf"/>
</dbReference>
<dbReference type="PANTHER" id="PTHR23030">
    <property type="entry name" value="PCD6 INTERACTING PROTEIN-RELATED"/>
    <property type="match status" value="1"/>
</dbReference>
<dbReference type="PANTHER" id="PTHR23030:SF39">
    <property type="entry name" value="PROGRAMMED CELL DEATH 6-INTERACTING PROTEIN"/>
    <property type="match status" value="1"/>
</dbReference>
<dbReference type="Pfam" id="PF13949">
    <property type="entry name" value="ALIX_LYPXL_bnd"/>
    <property type="match status" value="1"/>
</dbReference>
<dbReference type="Pfam" id="PF03097">
    <property type="entry name" value="BRO1"/>
    <property type="match status" value="1"/>
</dbReference>
<dbReference type="PRINTS" id="PR01217">
    <property type="entry name" value="PRICHEXTENSN"/>
</dbReference>
<dbReference type="SMART" id="SM01041">
    <property type="entry name" value="BRO1"/>
    <property type="match status" value="1"/>
</dbReference>
<dbReference type="PROSITE" id="PS51180">
    <property type="entry name" value="BRO1"/>
    <property type="match status" value="1"/>
</dbReference>
<sequence>MASFIWVQLKKTSEVDLAKPLVKFIQQTYPSGGEEQAQYCRAAEELSKLRRSALGRPLDKHEGALETLLRYYDQICSIEPKFPFSENQICLTFTWKDAFDKGSLFGGSVKLALASLGYEKSCVLFNCAALASQIAAEQNLDNDEGLKTAAKQYQFASGAFLHIKDTVLSALSREPTVDISPDTVGTLSLIMLAQAQEVFFLKATRDKMKDAIIAKLANQAADYFGDAFKQCQYKDTLPKEVFPTLAAKQCIMQANAEYHQSILAKQQKKFGEEIARLQHAAELIKNVASRYDEYVNVKDFSDKINRALTAAKKDNDFIYHDRVPDLKDLDPIGKATLVKPTPVNVPVSQKFTDLFEKMVPVSVQQSLAVFSQRKADLVNRSIAQMREATTLANGVLASLNLPAAIEDVSGDTVPQSILTKSTSVVEQGGIQTVDQLIKELPELLQRNREILEESLRLLDEEEATDNDLRAKFKDRWQRTPSNDLYKPLRAEGAKFRAVLDKAVQADGQVKERYQSHRDTIALLCKPEPELNAAIPSANPAKTMQGSEVVSVLKSLLSNLDEIKKERESLENDLKSVNFDMTSKFLTALAQDGVINEEALSVTELDRIYGGLTSKVQESLKKQEGLLKNIQVSHQEFSKMKQSNNEANLREEVLKNLATAYDNFVELVANLKEGTKFYNELTEILVRFQNKCSDIVFARKTERDELLKDLQQSIAREPSAPSIPPPAYQSSPAAGHAAAPPTPAPRTMPPAKPQPPARPPPPVLPANRVPPASAAAAPAGVGTASAAPPQTPGSAPPPQAQGPPYPTYPGYPGYCQMPMPMGYNPYAYGQYNMPYPPVYHQSPGQAPYPGPQQPTYPFPQPPQQSYYPQQ</sequence>
<proteinExistence type="evidence at protein level"/>
<gene>
    <name evidence="12" type="primary">Pdcd6ip</name>
    <name type="synonym">Aip1</name>
    <name type="synonym">Alix</name>
</gene>
<name>PDC6I_MOUSE</name>
<feature type="initiator methionine" description="Removed" evidence="1">
    <location>
        <position position="1"/>
    </location>
</feature>
<feature type="chain" id="PRO_0000218892" description="Programmed cell death 6-interacting protein">
    <location>
        <begin position="2"/>
        <end position="869"/>
    </location>
</feature>
<feature type="domain" description="BRO1" evidence="3">
    <location>
        <begin position="3"/>
        <end position="392"/>
    </location>
</feature>
<feature type="region of interest" description="Interaction with CHMP4A, CHMP4B and CHMP4C" evidence="1">
    <location>
        <begin position="176"/>
        <end position="503"/>
    </location>
</feature>
<feature type="region of interest" description="Interaction with SDCBP" evidence="5">
    <location>
        <begin position="383"/>
        <end position="869"/>
    </location>
</feature>
<feature type="region of interest" description="Self-association" evidence="1">
    <location>
        <begin position="503"/>
        <end position="869"/>
    </location>
</feature>
<feature type="region of interest" description="Disordered" evidence="4">
    <location>
        <begin position="715"/>
        <end position="808"/>
    </location>
</feature>
<feature type="region of interest" description="Interaction with TSG101" evidence="1">
    <location>
        <begin position="717"/>
        <end position="720"/>
    </location>
</feature>
<feature type="region of interest" description="Interaction with CEP55" evidence="1">
    <location>
        <begin position="798"/>
        <end position="807"/>
    </location>
</feature>
<feature type="region of interest" description="Disordered" evidence="4">
    <location>
        <begin position="838"/>
        <end position="869"/>
    </location>
</feature>
<feature type="compositionally biased region" description="Pro residues" evidence="4">
    <location>
        <begin position="739"/>
        <end position="763"/>
    </location>
</feature>
<feature type="compositionally biased region" description="Low complexity" evidence="4">
    <location>
        <begin position="764"/>
        <end position="787"/>
    </location>
</feature>
<feature type="compositionally biased region" description="Pro residues" evidence="4">
    <location>
        <begin position="788"/>
        <end position="808"/>
    </location>
</feature>
<feature type="compositionally biased region" description="Pro residues" evidence="4">
    <location>
        <begin position="845"/>
        <end position="861"/>
    </location>
</feature>
<feature type="modified residue" description="N-acetylalanine" evidence="1">
    <location>
        <position position="2"/>
    </location>
</feature>
<feature type="modified residue" description="N6-acetyllysine" evidence="1">
    <location>
        <position position="215"/>
    </location>
</feature>
<feature type="modified residue" description="Phosphothreonine" evidence="1">
    <location>
        <position position="479"/>
    </location>
</feature>
<feature type="modified residue" description="Phosphoserine" evidence="1">
    <location>
        <position position="481"/>
    </location>
</feature>
<feature type="modified residue" description="Phosphoserine" evidence="1">
    <location>
        <position position="730"/>
    </location>
</feature>
<feature type="modified residue" description="Phosphothreonine" evidence="1">
    <location>
        <position position="741"/>
    </location>
</feature>
<feature type="modified residue" description="Omega-N-methylarginine" evidence="1">
    <location>
        <position position="745"/>
    </location>
</feature>
<feature type="splice variant" id="VSP_007502" description="In isoform 2." evidence="9">
    <location>
        <begin position="159"/>
        <end position="805"/>
    </location>
</feature>
<feature type="splice variant" id="VSP_007501" description="In isoform 3." evidence="10">
    <original>K</original>
    <variation>KYFYFQ</variation>
    <location>
        <position position="239"/>
    </location>
</feature>
<feature type="sequence conflict" description="In Ref. 2; AAD26813." evidence="11" ref="2">
    <original>LDPIG</original>
    <variation>SGSYR</variation>
    <location>
        <begin position="329"/>
        <end position="333"/>
    </location>
</feature>
<feature type="sequence conflict" description="In Ref. 1; CAA06329." evidence="11" ref="1">
    <original>L</original>
    <variation>V</variation>
    <location>
        <position position="530"/>
    </location>
</feature>
<feature type="sequence conflict" description="In Ref. 2; AAD26813." evidence="11" ref="2">
    <original>EV</original>
    <variation>DL</variation>
    <location>
        <begin position="547"/>
        <end position="548"/>
    </location>
</feature>
<feature type="sequence conflict" description="In Ref. 6; AAH26823." evidence="11" ref="6">
    <original>N</original>
    <variation>T</variation>
    <location>
        <position position="595"/>
    </location>
</feature>
<feature type="sequence conflict" description="In Ref. 2; AAD26813." evidence="11" ref="2">
    <original>L</original>
    <variation>V</variation>
    <location>
        <position position="625"/>
    </location>
</feature>
<feature type="sequence conflict" description="In Ref. 2; AAD26813." evidence="11" ref="2">
    <original>KQ</original>
    <variation>NE</variation>
    <location>
        <begin position="640"/>
        <end position="641"/>
    </location>
</feature>
<feature type="sequence conflict" description="In Ref. 2; AAD26813." evidence="11" ref="2">
    <original>G</original>
    <variation>R</variation>
    <location>
        <position position="821"/>
    </location>
</feature>
<feature type="sequence conflict" description="In Ref. 1; CAA06330." evidence="11" ref="1">
    <original>P</original>
    <variation>L</variation>
    <location>
        <position position="853"/>
    </location>
</feature>
<keyword id="KW-0007">Acetylation</keyword>
<keyword id="KW-0025">Alternative splicing</keyword>
<keyword id="KW-0053">Apoptosis</keyword>
<keyword id="KW-0131">Cell cycle</keyword>
<keyword id="KW-0132">Cell division</keyword>
<keyword id="KW-0965">Cell junction</keyword>
<keyword id="KW-0963">Cytoplasm</keyword>
<keyword id="KW-0206">Cytoskeleton</keyword>
<keyword id="KW-0488">Methylation</keyword>
<keyword id="KW-0597">Phosphoprotein</keyword>
<keyword id="KW-0653">Protein transport</keyword>
<keyword id="KW-1185">Reference proteome</keyword>
<keyword id="KW-0964">Secreted</keyword>
<keyword id="KW-0796">Tight junction</keyword>
<keyword id="KW-0813">Transport</keyword>